<accession>Q1GBK6</accession>
<protein>
    <recommendedName>
        <fullName evidence="1">Large ribosomal subunit protein uL5</fullName>
    </recommendedName>
    <alternativeName>
        <fullName evidence="2">50S ribosomal protein L5</fullName>
    </alternativeName>
</protein>
<name>RL5_LACDA</name>
<comment type="function">
    <text evidence="1">This is one of the proteins that bind and probably mediate the attachment of the 5S RNA into the large ribosomal subunit, where it forms part of the central protuberance. In the 70S ribosome it contacts protein S13 of the 30S subunit (bridge B1b), connecting the 2 subunits; this bridge is implicated in subunit movement. Contacts the P site tRNA; the 5S rRNA and some of its associated proteins might help stabilize positioning of ribosome-bound tRNAs.</text>
</comment>
<comment type="subunit">
    <text evidence="1">Part of the 50S ribosomal subunit; part of the 5S rRNA/L5/L18/L25 subcomplex. Contacts the 5S rRNA and the P site tRNA. Forms a bridge to the 30S subunit in the 70S ribosome.</text>
</comment>
<comment type="similarity">
    <text evidence="1">Belongs to the universal ribosomal protein uL5 family.</text>
</comment>
<keyword id="KW-1185">Reference proteome</keyword>
<keyword id="KW-0687">Ribonucleoprotein</keyword>
<keyword id="KW-0689">Ribosomal protein</keyword>
<keyword id="KW-0694">RNA-binding</keyword>
<keyword id="KW-0699">rRNA-binding</keyword>
<keyword id="KW-0820">tRNA-binding</keyword>
<proteinExistence type="inferred from homology"/>
<organism>
    <name type="scientific">Lactobacillus delbrueckii subsp. bulgaricus (strain ATCC 11842 / DSM 20081 / BCRC 10696 / JCM 1002 / NBRC 13953 / NCIMB 11778 / NCTC 12712 / WDCM 00102 / Lb 14)</name>
    <dbReference type="NCBI Taxonomy" id="390333"/>
    <lineage>
        <taxon>Bacteria</taxon>
        <taxon>Bacillati</taxon>
        <taxon>Bacillota</taxon>
        <taxon>Bacilli</taxon>
        <taxon>Lactobacillales</taxon>
        <taxon>Lactobacillaceae</taxon>
        <taxon>Lactobacillus</taxon>
    </lineage>
</organism>
<gene>
    <name evidence="1" type="primary">rplE</name>
    <name type="ordered locus">Ldb0408</name>
</gene>
<evidence type="ECO:0000255" key="1">
    <source>
        <dbReference type="HAMAP-Rule" id="MF_01333"/>
    </source>
</evidence>
<evidence type="ECO:0000305" key="2"/>
<dbReference type="EMBL" id="CR954253">
    <property type="protein sequence ID" value="CAI97243.1"/>
    <property type="molecule type" value="Genomic_DNA"/>
</dbReference>
<dbReference type="RefSeq" id="WP_003620844.1">
    <property type="nucleotide sequence ID" value="NZ_JQAV01000001.1"/>
</dbReference>
<dbReference type="SMR" id="Q1GBK6"/>
<dbReference type="STRING" id="390333.Ldb0408"/>
<dbReference type="KEGG" id="ldb:Ldb0408"/>
<dbReference type="PATRIC" id="fig|390333.13.peg.382"/>
<dbReference type="eggNOG" id="COG0094">
    <property type="taxonomic scope" value="Bacteria"/>
</dbReference>
<dbReference type="HOGENOM" id="CLU_061015_2_1_9"/>
<dbReference type="BioCyc" id="LDEL390333:LDB_RS01735-MONOMER"/>
<dbReference type="Proteomes" id="UP000001259">
    <property type="component" value="Chromosome"/>
</dbReference>
<dbReference type="GO" id="GO:1990904">
    <property type="term" value="C:ribonucleoprotein complex"/>
    <property type="evidence" value="ECO:0007669"/>
    <property type="project" value="UniProtKB-KW"/>
</dbReference>
<dbReference type="GO" id="GO:0005840">
    <property type="term" value="C:ribosome"/>
    <property type="evidence" value="ECO:0007669"/>
    <property type="project" value="UniProtKB-KW"/>
</dbReference>
<dbReference type="GO" id="GO:0019843">
    <property type="term" value="F:rRNA binding"/>
    <property type="evidence" value="ECO:0007669"/>
    <property type="project" value="UniProtKB-UniRule"/>
</dbReference>
<dbReference type="GO" id="GO:0003735">
    <property type="term" value="F:structural constituent of ribosome"/>
    <property type="evidence" value="ECO:0007669"/>
    <property type="project" value="InterPro"/>
</dbReference>
<dbReference type="GO" id="GO:0000049">
    <property type="term" value="F:tRNA binding"/>
    <property type="evidence" value="ECO:0007669"/>
    <property type="project" value="UniProtKB-UniRule"/>
</dbReference>
<dbReference type="GO" id="GO:0006412">
    <property type="term" value="P:translation"/>
    <property type="evidence" value="ECO:0007669"/>
    <property type="project" value="UniProtKB-UniRule"/>
</dbReference>
<dbReference type="FunFam" id="3.30.1440.10:FF:000001">
    <property type="entry name" value="50S ribosomal protein L5"/>
    <property type="match status" value="1"/>
</dbReference>
<dbReference type="Gene3D" id="3.30.1440.10">
    <property type="match status" value="1"/>
</dbReference>
<dbReference type="HAMAP" id="MF_01333_B">
    <property type="entry name" value="Ribosomal_uL5_B"/>
    <property type="match status" value="1"/>
</dbReference>
<dbReference type="InterPro" id="IPR002132">
    <property type="entry name" value="Ribosomal_uL5"/>
</dbReference>
<dbReference type="InterPro" id="IPR020930">
    <property type="entry name" value="Ribosomal_uL5_bac-type"/>
</dbReference>
<dbReference type="InterPro" id="IPR031309">
    <property type="entry name" value="Ribosomal_uL5_C"/>
</dbReference>
<dbReference type="InterPro" id="IPR020929">
    <property type="entry name" value="Ribosomal_uL5_CS"/>
</dbReference>
<dbReference type="InterPro" id="IPR022803">
    <property type="entry name" value="Ribosomal_uL5_dom_sf"/>
</dbReference>
<dbReference type="InterPro" id="IPR031310">
    <property type="entry name" value="Ribosomal_uL5_N"/>
</dbReference>
<dbReference type="NCBIfam" id="NF000585">
    <property type="entry name" value="PRK00010.1"/>
    <property type="match status" value="1"/>
</dbReference>
<dbReference type="PANTHER" id="PTHR11994">
    <property type="entry name" value="60S RIBOSOMAL PROTEIN L11-RELATED"/>
    <property type="match status" value="1"/>
</dbReference>
<dbReference type="Pfam" id="PF00281">
    <property type="entry name" value="Ribosomal_L5"/>
    <property type="match status" value="1"/>
</dbReference>
<dbReference type="Pfam" id="PF00673">
    <property type="entry name" value="Ribosomal_L5_C"/>
    <property type="match status" value="1"/>
</dbReference>
<dbReference type="PIRSF" id="PIRSF002161">
    <property type="entry name" value="Ribosomal_L5"/>
    <property type="match status" value="1"/>
</dbReference>
<dbReference type="SUPFAM" id="SSF55282">
    <property type="entry name" value="RL5-like"/>
    <property type="match status" value="1"/>
</dbReference>
<dbReference type="PROSITE" id="PS00358">
    <property type="entry name" value="RIBOSOMAL_L5"/>
    <property type="match status" value="1"/>
</dbReference>
<feature type="chain" id="PRO_1000052754" description="Large ribosomal subunit protein uL5">
    <location>
        <begin position="1"/>
        <end position="180"/>
    </location>
</feature>
<sequence length="180" mass="20145">MANSFATKYNEEIVPALTKKFNYTSSMQVPKIDKIVLNMGVGDAVANAKNLDEAVEELTLISGQKPMITKAKKSIANFRLREGMSIGAKVTLRGDRMYDFLSKLINVSLPRVRDFRGVSTRSFDGRGNYTLGVKEQLIFPEIDFDKVNRTRGLDIVIVTTAQTDEEARELLTQFGMPFAK</sequence>
<reference key="1">
    <citation type="journal article" date="2006" name="Proc. Natl. Acad. Sci. U.S.A.">
        <title>The complete genome sequence of Lactobacillus bulgaricus reveals extensive and ongoing reductive evolution.</title>
        <authorList>
            <person name="van de Guchte M."/>
            <person name="Penaud S."/>
            <person name="Grimaldi C."/>
            <person name="Barbe V."/>
            <person name="Bryson K."/>
            <person name="Nicolas P."/>
            <person name="Robert C."/>
            <person name="Oztas S."/>
            <person name="Mangenot S."/>
            <person name="Couloux A."/>
            <person name="Loux V."/>
            <person name="Dervyn R."/>
            <person name="Bossy R."/>
            <person name="Bolotin A."/>
            <person name="Batto J.-M."/>
            <person name="Walunas T."/>
            <person name="Gibrat J.-F."/>
            <person name="Bessieres P."/>
            <person name="Weissenbach J."/>
            <person name="Ehrlich S.D."/>
            <person name="Maguin E."/>
        </authorList>
    </citation>
    <scope>NUCLEOTIDE SEQUENCE [LARGE SCALE GENOMIC DNA]</scope>
    <source>
        <strain>ATCC 11842 / DSM 20081 / BCRC 10696 / JCM 1002 / NBRC 13953 / NCIMB 11778 / NCTC 12712 / WDCM 00102 / Lb 14</strain>
    </source>
</reference>